<sequence length="96" mass="10185">MNIRPLHDRVIVKRLEVESTSAGGIVLTGSAAEKSTRGEILAVGNGRILENGTVKPLDVKVGDVVIFNEGYGVKKEKIDGQEVLILSEADLMAVVG</sequence>
<protein>
    <recommendedName>
        <fullName evidence="1">Co-chaperonin GroES</fullName>
    </recommendedName>
    <alternativeName>
        <fullName evidence="1">10 kDa chaperonin</fullName>
    </alternativeName>
    <alternativeName>
        <fullName evidence="1">Chaperonin-10</fullName>
        <shortName evidence="1">Cpn10</shortName>
    </alternativeName>
</protein>
<feature type="chain" id="PRO_1000082391" description="Co-chaperonin GroES">
    <location>
        <begin position="1"/>
        <end position="96"/>
    </location>
</feature>
<gene>
    <name evidence="1" type="primary">groES</name>
    <name evidence="1" type="synonym">groS</name>
    <name type="ordered locus">Sbal195_0671</name>
</gene>
<dbReference type="EMBL" id="CP000891">
    <property type="protein sequence ID" value="ABX47849.1"/>
    <property type="molecule type" value="Genomic_DNA"/>
</dbReference>
<dbReference type="RefSeq" id="WP_006086113.1">
    <property type="nucleotide sequence ID" value="NC_009997.1"/>
</dbReference>
<dbReference type="SMR" id="A9L0C0"/>
<dbReference type="KEGG" id="sbn:Sbal195_0671"/>
<dbReference type="HOGENOM" id="CLU_132825_1_1_6"/>
<dbReference type="Proteomes" id="UP000000770">
    <property type="component" value="Chromosome"/>
</dbReference>
<dbReference type="GO" id="GO:0005737">
    <property type="term" value="C:cytoplasm"/>
    <property type="evidence" value="ECO:0007669"/>
    <property type="project" value="UniProtKB-SubCell"/>
</dbReference>
<dbReference type="GO" id="GO:0005524">
    <property type="term" value="F:ATP binding"/>
    <property type="evidence" value="ECO:0007669"/>
    <property type="project" value="InterPro"/>
</dbReference>
<dbReference type="GO" id="GO:0046872">
    <property type="term" value="F:metal ion binding"/>
    <property type="evidence" value="ECO:0007669"/>
    <property type="project" value="TreeGrafter"/>
</dbReference>
<dbReference type="GO" id="GO:0044183">
    <property type="term" value="F:protein folding chaperone"/>
    <property type="evidence" value="ECO:0007669"/>
    <property type="project" value="InterPro"/>
</dbReference>
<dbReference type="GO" id="GO:0051087">
    <property type="term" value="F:protein-folding chaperone binding"/>
    <property type="evidence" value="ECO:0007669"/>
    <property type="project" value="TreeGrafter"/>
</dbReference>
<dbReference type="GO" id="GO:0051082">
    <property type="term" value="F:unfolded protein binding"/>
    <property type="evidence" value="ECO:0007669"/>
    <property type="project" value="TreeGrafter"/>
</dbReference>
<dbReference type="GO" id="GO:0051085">
    <property type="term" value="P:chaperone cofactor-dependent protein refolding"/>
    <property type="evidence" value="ECO:0007669"/>
    <property type="project" value="TreeGrafter"/>
</dbReference>
<dbReference type="CDD" id="cd00320">
    <property type="entry name" value="cpn10"/>
    <property type="match status" value="1"/>
</dbReference>
<dbReference type="FunFam" id="2.30.33.40:FF:000001">
    <property type="entry name" value="10 kDa chaperonin"/>
    <property type="match status" value="1"/>
</dbReference>
<dbReference type="Gene3D" id="2.30.33.40">
    <property type="entry name" value="GroES chaperonin"/>
    <property type="match status" value="1"/>
</dbReference>
<dbReference type="HAMAP" id="MF_00580">
    <property type="entry name" value="CH10"/>
    <property type="match status" value="1"/>
</dbReference>
<dbReference type="InterPro" id="IPR020818">
    <property type="entry name" value="Chaperonin_GroES"/>
</dbReference>
<dbReference type="InterPro" id="IPR037124">
    <property type="entry name" value="Chaperonin_GroES_sf"/>
</dbReference>
<dbReference type="InterPro" id="IPR018369">
    <property type="entry name" value="Chaprnonin_Cpn10_CS"/>
</dbReference>
<dbReference type="InterPro" id="IPR011032">
    <property type="entry name" value="GroES-like_sf"/>
</dbReference>
<dbReference type="NCBIfam" id="NF001526">
    <property type="entry name" value="PRK00364.1-1"/>
    <property type="match status" value="1"/>
</dbReference>
<dbReference type="NCBIfam" id="NF001527">
    <property type="entry name" value="PRK00364.1-2"/>
    <property type="match status" value="1"/>
</dbReference>
<dbReference type="NCBIfam" id="NF001531">
    <property type="entry name" value="PRK00364.2-2"/>
    <property type="match status" value="1"/>
</dbReference>
<dbReference type="PANTHER" id="PTHR10772">
    <property type="entry name" value="10 KDA HEAT SHOCK PROTEIN"/>
    <property type="match status" value="1"/>
</dbReference>
<dbReference type="PANTHER" id="PTHR10772:SF58">
    <property type="entry name" value="CO-CHAPERONIN GROES"/>
    <property type="match status" value="1"/>
</dbReference>
<dbReference type="Pfam" id="PF00166">
    <property type="entry name" value="Cpn10"/>
    <property type="match status" value="1"/>
</dbReference>
<dbReference type="PRINTS" id="PR00297">
    <property type="entry name" value="CHAPERONIN10"/>
</dbReference>
<dbReference type="SMART" id="SM00883">
    <property type="entry name" value="Cpn10"/>
    <property type="match status" value="1"/>
</dbReference>
<dbReference type="SUPFAM" id="SSF50129">
    <property type="entry name" value="GroES-like"/>
    <property type="match status" value="1"/>
</dbReference>
<dbReference type="PROSITE" id="PS00681">
    <property type="entry name" value="CHAPERONINS_CPN10"/>
    <property type="match status" value="1"/>
</dbReference>
<proteinExistence type="inferred from homology"/>
<keyword id="KW-0143">Chaperone</keyword>
<keyword id="KW-0963">Cytoplasm</keyword>
<name>CH10_SHEB9</name>
<organism>
    <name type="scientific">Shewanella baltica (strain OS195)</name>
    <dbReference type="NCBI Taxonomy" id="399599"/>
    <lineage>
        <taxon>Bacteria</taxon>
        <taxon>Pseudomonadati</taxon>
        <taxon>Pseudomonadota</taxon>
        <taxon>Gammaproteobacteria</taxon>
        <taxon>Alteromonadales</taxon>
        <taxon>Shewanellaceae</taxon>
        <taxon>Shewanella</taxon>
    </lineage>
</organism>
<reference key="1">
    <citation type="submission" date="2007-11" db="EMBL/GenBank/DDBJ databases">
        <title>Complete sequence of chromosome of Shewanella baltica OS195.</title>
        <authorList>
            <consortium name="US DOE Joint Genome Institute"/>
            <person name="Copeland A."/>
            <person name="Lucas S."/>
            <person name="Lapidus A."/>
            <person name="Barry K."/>
            <person name="Glavina del Rio T."/>
            <person name="Dalin E."/>
            <person name="Tice H."/>
            <person name="Pitluck S."/>
            <person name="Chain P."/>
            <person name="Malfatti S."/>
            <person name="Shin M."/>
            <person name="Vergez L."/>
            <person name="Schmutz J."/>
            <person name="Larimer F."/>
            <person name="Land M."/>
            <person name="Hauser L."/>
            <person name="Kyrpides N."/>
            <person name="Kim E."/>
            <person name="Brettar I."/>
            <person name="Rodrigues J."/>
            <person name="Konstantinidis K."/>
            <person name="Klappenbach J."/>
            <person name="Hofle M."/>
            <person name="Tiedje J."/>
            <person name="Richardson P."/>
        </authorList>
    </citation>
    <scope>NUCLEOTIDE SEQUENCE [LARGE SCALE GENOMIC DNA]</scope>
    <source>
        <strain>OS195</strain>
    </source>
</reference>
<comment type="function">
    <text evidence="1">Together with the chaperonin GroEL, plays an essential role in assisting protein folding. The GroEL-GroES system forms a nano-cage that allows encapsulation of the non-native substrate proteins and provides a physical environment optimized to promote and accelerate protein folding. GroES binds to the apical surface of the GroEL ring, thereby capping the opening of the GroEL channel.</text>
</comment>
<comment type="subunit">
    <text evidence="1">Heptamer of 7 subunits arranged in a ring. Interacts with the chaperonin GroEL.</text>
</comment>
<comment type="subcellular location">
    <subcellularLocation>
        <location evidence="1">Cytoplasm</location>
    </subcellularLocation>
</comment>
<comment type="similarity">
    <text evidence="1">Belongs to the GroES chaperonin family.</text>
</comment>
<evidence type="ECO:0000255" key="1">
    <source>
        <dbReference type="HAMAP-Rule" id="MF_00580"/>
    </source>
</evidence>
<accession>A9L0C0</accession>